<feature type="chain" id="PRO_0000308585" description="Nuclear cap-binding protein subunit 3">
    <location>
        <begin position="1"/>
        <end position="694"/>
    </location>
</feature>
<feature type="region of interest" description="Disordered" evidence="2">
    <location>
        <begin position="1"/>
        <end position="47"/>
    </location>
</feature>
<feature type="region of interest" description="RNA recognition motif (RRM) domain" evidence="1">
    <location>
        <begin position="126"/>
        <end position="187"/>
    </location>
</feature>
<feature type="region of interest" description="Disordered" evidence="2">
    <location>
        <begin position="183"/>
        <end position="277"/>
    </location>
</feature>
<feature type="region of interest" description="Disordered" evidence="2">
    <location>
        <begin position="336"/>
        <end position="430"/>
    </location>
</feature>
<feature type="region of interest" description="Disordered" evidence="2">
    <location>
        <begin position="461"/>
        <end position="694"/>
    </location>
</feature>
<feature type="short sequence motif" description="WLDD motif; essential for 7-methylguanosine-containing mRNA cap binding" evidence="1">
    <location>
        <begin position="155"/>
        <end position="158"/>
    </location>
</feature>
<feature type="compositionally biased region" description="Basic and acidic residues" evidence="2">
    <location>
        <begin position="15"/>
        <end position="36"/>
    </location>
</feature>
<feature type="compositionally biased region" description="Acidic residues" evidence="2">
    <location>
        <begin position="37"/>
        <end position="47"/>
    </location>
</feature>
<feature type="compositionally biased region" description="Polar residues" evidence="2">
    <location>
        <begin position="189"/>
        <end position="203"/>
    </location>
</feature>
<feature type="compositionally biased region" description="Acidic residues" evidence="2">
    <location>
        <begin position="212"/>
        <end position="235"/>
    </location>
</feature>
<feature type="compositionally biased region" description="Basic and acidic residues" evidence="2">
    <location>
        <begin position="236"/>
        <end position="264"/>
    </location>
</feature>
<feature type="compositionally biased region" description="Acidic residues" evidence="2">
    <location>
        <begin position="368"/>
        <end position="386"/>
    </location>
</feature>
<feature type="compositionally biased region" description="Basic and acidic residues" evidence="2">
    <location>
        <begin position="387"/>
        <end position="404"/>
    </location>
</feature>
<feature type="compositionally biased region" description="Gly residues" evidence="2">
    <location>
        <begin position="477"/>
        <end position="496"/>
    </location>
</feature>
<feature type="compositionally biased region" description="Basic and acidic residues" evidence="2">
    <location>
        <begin position="501"/>
        <end position="517"/>
    </location>
</feature>
<feature type="compositionally biased region" description="Basic and acidic residues" evidence="2">
    <location>
        <begin position="563"/>
        <end position="595"/>
    </location>
</feature>
<feature type="compositionally biased region" description="Basic and acidic residues" evidence="2">
    <location>
        <begin position="605"/>
        <end position="618"/>
    </location>
</feature>
<feature type="compositionally biased region" description="Acidic residues" evidence="2">
    <location>
        <begin position="634"/>
        <end position="646"/>
    </location>
</feature>
<feature type="compositionally biased region" description="Low complexity" evidence="2">
    <location>
        <begin position="685"/>
        <end position="694"/>
    </location>
</feature>
<reference key="1">
    <citation type="submission" date="2003-01" db="EMBL/GenBank/DDBJ databases">
        <authorList>
            <consortium name="NIH - Zebrafish Gene Collection (ZGC) project"/>
        </authorList>
    </citation>
    <scope>NUCLEOTIDE SEQUENCE [LARGE SCALE MRNA]</scope>
    <source>
        <strain>AB</strain>
    </source>
</reference>
<gene>
    <name evidence="1" type="primary">ncbp3</name>
    <name type="ORF">zgc:55870</name>
</gene>
<proteinExistence type="evidence at transcript level"/>
<accession>Q803E1</accession>
<keyword id="KW-0963">Cytoplasm</keyword>
<keyword id="KW-0506">mRNA capping</keyword>
<keyword id="KW-0507">mRNA processing</keyword>
<keyword id="KW-0509">mRNA transport</keyword>
<keyword id="KW-0539">Nucleus</keyword>
<keyword id="KW-1185">Reference proteome</keyword>
<keyword id="KW-0694">RNA-binding</keyword>
<keyword id="KW-0813">Transport</keyword>
<protein>
    <recommendedName>
        <fullName evidence="1">Nuclear cap-binding protein subunit 3</fullName>
    </recommendedName>
</protein>
<organism>
    <name type="scientific">Danio rerio</name>
    <name type="common">Zebrafish</name>
    <name type="synonym">Brachydanio rerio</name>
    <dbReference type="NCBI Taxonomy" id="7955"/>
    <lineage>
        <taxon>Eukaryota</taxon>
        <taxon>Metazoa</taxon>
        <taxon>Chordata</taxon>
        <taxon>Craniata</taxon>
        <taxon>Vertebrata</taxon>
        <taxon>Euteleostomi</taxon>
        <taxon>Actinopterygii</taxon>
        <taxon>Neopterygii</taxon>
        <taxon>Teleostei</taxon>
        <taxon>Ostariophysi</taxon>
        <taxon>Cypriniformes</taxon>
        <taxon>Danionidae</taxon>
        <taxon>Danioninae</taxon>
        <taxon>Danio</taxon>
    </lineage>
</organism>
<evidence type="ECO:0000250" key="1">
    <source>
        <dbReference type="UniProtKB" id="Q53F19"/>
    </source>
</evidence>
<evidence type="ECO:0000256" key="2">
    <source>
        <dbReference type="SAM" id="MobiDB-lite"/>
    </source>
</evidence>
<evidence type="ECO:0000305" key="3"/>
<name>NCBP3_DANRE</name>
<comment type="function">
    <text evidence="1">Associates with NCBP1/CBP80 to form an alternative cap-binding complex (CBC) which plays a key role in mRNA export. NCBP3 serves as adapter protein linking the capped RNAs (m7GpppG-capped RNA) to NCBP1/CBP80. Unlike the conventional CBC with NCBP2 which binds both small nuclear RNA (snRNA) and messenger (mRNA) and is involved in their export from the nucleus, the alternative CBC with NCBP3 does not bind snRNA and associates only with mRNA thereby playing a role in only mRNA export.</text>
</comment>
<comment type="subunit">
    <text evidence="1">Component of an alternative cap-binding complex (CBC) composed of NCBP1/CBP80 and NCBP3.</text>
</comment>
<comment type="subcellular location">
    <subcellularLocation>
        <location evidence="1">Nucleus</location>
    </subcellularLocation>
    <subcellularLocation>
        <location evidence="1">Cytoplasm</location>
    </subcellularLocation>
</comment>
<comment type="similarity">
    <text evidence="3">Belongs to the NCBP3 family.</text>
</comment>
<dbReference type="EMBL" id="BC044520">
    <property type="protein sequence ID" value="AAH44520.1"/>
    <property type="molecule type" value="mRNA"/>
</dbReference>
<dbReference type="RefSeq" id="NP_956437.1">
    <property type="nucleotide sequence ID" value="NM_200143.1"/>
</dbReference>
<dbReference type="SMR" id="Q803E1"/>
<dbReference type="FunCoup" id="Q803E1">
    <property type="interactions" value="2127"/>
</dbReference>
<dbReference type="STRING" id="7955.ENSDARP00000065503"/>
<dbReference type="PaxDb" id="7955-ENSDARP00000065503"/>
<dbReference type="GeneID" id="393112"/>
<dbReference type="KEGG" id="dre:393112"/>
<dbReference type="AGR" id="ZFIN:ZDB-GENE-040426-826"/>
<dbReference type="CTD" id="55421"/>
<dbReference type="ZFIN" id="ZDB-GENE-040426-826">
    <property type="gene designation" value="ncbp3"/>
</dbReference>
<dbReference type="eggNOG" id="ENOG502QRX4">
    <property type="taxonomic scope" value="Eukaryota"/>
</dbReference>
<dbReference type="InParanoid" id="Q803E1"/>
<dbReference type="OrthoDB" id="422106at2759"/>
<dbReference type="PhylomeDB" id="Q803E1"/>
<dbReference type="PRO" id="PR:Q803E1"/>
<dbReference type="Proteomes" id="UP000000437">
    <property type="component" value="Chromosome 21"/>
</dbReference>
<dbReference type="GO" id="GO:0005737">
    <property type="term" value="C:cytoplasm"/>
    <property type="evidence" value="ECO:0000250"/>
    <property type="project" value="UniProtKB"/>
</dbReference>
<dbReference type="GO" id="GO:0005634">
    <property type="term" value="C:nucleus"/>
    <property type="evidence" value="ECO:0000250"/>
    <property type="project" value="UniProtKB"/>
</dbReference>
<dbReference type="GO" id="GO:0003729">
    <property type="term" value="F:mRNA binding"/>
    <property type="evidence" value="ECO:0000250"/>
    <property type="project" value="UniProtKB"/>
</dbReference>
<dbReference type="GO" id="GO:0000340">
    <property type="term" value="F:RNA 7-methylguanosine cap binding"/>
    <property type="evidence" value="ECO:0000250"/>
    <property type="project" value="UniProtKB"/>
</dbReference>
<dbReference type="GO" id="GO:0000339">
    <property type="term" value="F:RNA cap binding"/>
    <property type="evidence" value="ECO:0000318"/>
    <property type="project" value="GO_Central"/>
</dbReference>
<dbReference type="GO" id="GO:0006370">
    <property type="term" value="P:7-methylguanosine mRNA capping"/>
    <property type="evidence" value="ECO:0007669"/>
    <property type="project" value="UniProtKB-KW"/>
</dbReference>
<dbReference type="GO" id="GO:0051028">
    <property type="term" value="P:mRNA transport"/>
    <property type="evidence" value="ECO:0007669"/>
    <property type="project" value="UniProtKB-KW"/>
</dbReference>
<dbReference type="InterPro" id="IPR019416">
    <property type="entry name" value="NCBP3"/>
</dbReference>
<dbReference type="PANTHER" id="PTHR16291">
    <property type="entry name" value="NUCLEAR CAP-BINDING PROTEIN SUBUNIT 3"/>
    <property type="match status" value="1"/>
</dbReference>
<dbReference type="PANTHER" id="PTHR16291:SF0">
    <property type="entry name" value="NUCLEAR CAP-BINDING PROTEIN SUBUNIT 3"/>
    <property type="match status" value="1"/>
</dbReference>
<dbReference type="Pfam" id="PF10309">
    <property type="entry name" value="NCBP3"/>
    <property type="match status" value="1"/>
</dbReference>
<sequence>MAAVRSLRVSVKSDSASDRSESDSESDSDRDAREAEPMEVEEGEVELESIPVRRSLKELLPDTSRRYENKAGTFITGIDVTSKEAIEKKEKRARRFHFRAEENLTQKDVVLERDLLKKMIPKVRLEALHMSGVDDMSTQDVFGYFKEYPPAHIEWIDDASCNVVWLDDITSTRALINLSRMPDKEEVTNTDSSKPSELPVQTQKARRSRGSDDDDDDDEEEEGEVDDDDDDDEEDEKARDIEDETEKKPQETRETSLSQAERDSLLQNEPRPTVKPFKGNKLFLRFATHDDKKELGAARRSRYYMKYGNPNYGGMKGILSNSWKRRYHTRRIQRDILKTKKPLIGDSMGHTPPYTHRHSADLVNLPEEPIEEEEEEEEDGEEDMDADDRVVEYKDRGEKERGPRLVEGGLRSRLGGPSPTSSDSDEMDYDLELKMISTPSPKKSMKMTMYADEVETNLRSLRNSIRTESSGSVKSRIGGGGGGGSGGAVEGRGEGGSSKSTSEKVTDVRQLLEEKRQGLSQQRSRPPVATSGKTDVRQRLGKRPHSPERRRSVSPVISRKTASRREPLSDVRSRLGVAKHDNRSLFSEPPKDKKTGGLWSRLGPSHKDSGSGDEDKPSSRASSSRGIRRRKDEDSDGVEDEDEEDDSHLQKMWGAMIKQKEQQSNKMKKSRLDNLPSLQIEISRDGSNGSDSDS</sequence>